<dbReference type="EC" id="4.2.1.9" evidence="1"/>
<dbReference type="EMBL" id="AE010299">
    <property type="protein sequence ID" value="AAM05208.1"/>
    <property type="molecule type" value="Genomic_DNA"/>
</dbReference>
<dbReference type="RefSeq" id="WP_011021805.1">
    <property type="nucleotide sequence ID" value="NC_003552.1"/>
</dbReference>
<dbReference type="SMR" id="Q8TPV2"/>
<dbReference type="FunCoup" id="Q8TPV2">
    <property type="interactions" value="176"/>
</dbReference>
<dbReference type="STRING" id="188937.MA_1802"/>
<dbReference type="EnsemblBacteria" id="AAM05208">
    <property type="protein sequence ID" value="AAM05208"/>
    <property type="gene ID" value="MA_1802"/>
</dbReference>
<dbReference type="GeneID" id="1473691"/>
<dbReference type="KEGG" id="mac:MA_1802"/>
<dbReference type="HOGENOM" id="CLU_014271_4_2_2"/>
<dbReference type="InParanoid" id="Q8TPV2"/>
<dbReference type="OrthoDB" id="8674at2157"/>
<dbReference type="PhylomeDB" id="Q8TPV2"/>
<dbReference type="UniPathway" id="UPA00047">
    <property type="reaction ID" value="UER00057"/>
</dbReference>
<dbReference type="UniPathway" id="UPA00049">
    <property type="reaction ID" value="UER00061"/>
</dbReference>
<dbReference type="Proteomes" id="UP000002487">
    <property type="component" value="Chromosome"/>
</dbReference>
<dbReference type="GO" id="GO:0005829">
    <property type="term" value="C:cytosol"/>
    <property type="evidence" value="ECO:0000318"/>
    <property type="project" value="GO_Central"/>
</dbReference>
<dbReference type="GO" id="GO:0051537">
    <property type="term" value="F:2 iron, 2 sulfur cluster binding"/>
    <property type="evidence" value="ECO:0007669"/>
    <property type="project" value="UniProtKB-UniRule"/>
</dbReference>
<dbReference type="GO" id="GO:0004160">
    <property type="term" value="F:dihydroxy-acid dehydratase activity"/>
    <property type="evidence" value="ECO:0007669"/>
    <property type="project" value="UniProtKB-UniRule"/>
</dbReference>
<dbReference type="GO" id="GO:0016836">
    <property type="term" value="F:hydro-lyase activity"/>
    <property type="evidence" value="ECO:0000318"/>
    <property type="project" value="GO_Central"/>
</dbReference>
<dbReference type="GO" id="GO:0000287">
    <property type="term" value="F:magnesium ion binding"/>
    <property type="evidence" value="ECO:0007669"/>
    <property type="project" value="UniProtKB-UniRule"/>
</dbReference>
<dbReference type="GO" id="GO:0009097">
    <property type="term" value="P:isoleucine biosynthetic process"/>
    <property type="evidence" value="ECO:0007669"/>
    <property type="project" value="UniProtKB-UniRule"/>
</dbReference>
<dbReference type="GO" id="GO:0009099">
    <property type="term" value="P:L-valine biosynthetic process"/>
    <property type="evidence" value="ECO:0007669"/>
    <property type="project" value="UniProtKB-UniRule"/>
</dbReference>
<dbReference type="FunFam" id="3.50.30.80:FF:000001">
    <property type="entry name" value="Dihydroxy-acid dehydratase"/>
    <property type="match status" value="1"/>
</dbReference>
<dbReference type="Gene3D" id="3.50.30.80">
    <property type="entry name" value="IlvD/EDD C-terminal domain-like"/>
    <property type="match status" value="1"/>
</dbReference>
<dbReference type="HAMAP" id="MF_00012">
    <property type="entry name" value="IlvD"/>
    <property type="match status" value="1"/>
</dbReference>
<dbReference type="InterPro" id="IPR042096">
    <property type="entry name" value="Dihydro-acid_dehy_C"/>
</dbReference>
<dbReference type="InterPro" id="IPR004404">
    <property type="entry name" value="DihydroxyA_deHydtase"/>
</dbReference>
<dbReference type="InterPro" id="IPR020558">
    <property type="entry name" value="DiOHA_6PGluconate_deHydtase_CS"/>
</dbReference>
<dbReference type="InterPro" id="IPR056740">
    <property type="entry name" value="ILV_EDD_C"/>
</dbReference>
<dbReference type="InterPro" id="IPR000581">
    <property type="entry name" value="ILV_EDD_N"/>
</dbReference>
<dbReference type="InterPro" id="IPR037237">
    <property type="entry name" value="IlvD/EDD_N"/>
</dbReference>
<dbReference type="NCBIfam" id="TIGR00110">
    <property type="entry name" value="ilvD"/>
    <property type="match status" value="1"/>
</dbReference>
<dbReference type="NCBIfam" id="NF002068">
    <property type="entry name" value="PRK00911.1"/>
    <property type="match status" value="1"/>
</dbReference>
<dbReference type="PANTHER" id="PTHR43661">
    <property type="entry name" value="D-XYLONATE DEHYDRATASE"/>
    <property type="match status" value="1"/>
</dbReference>
<dbReference type="PANTHER" id="PTHR43661:SF3">
    <property type="entry name" value="D-XYLONATE DEHYDRATASE YAGF-RELATED"/>
    <property type="match status" value="1"/>
</dbReference>
<dbReference type="Pfam" id="PF24877">
    <property type="entry name" value="ILV_EDD_C"/>
    <property type="match status" value="1"/>
</dbReference>
<dbReference type="Pfam" id="PF00920">
    <property type="entry name" value="ILVD_EDD_N"/>
    <property type="match status" value="1"/>
</dbReference>
<dbReference type="SUPFAM" id="SSF143975">
    <property type="entry name" value="IlvD/EDD N-terminal domain-like"/>
    <property type="match status" value="1"/>
</dbReference>
<dbReference type="SUPFAM" id="SSF52016">
    <property type="entry name" value="LeuD/IlvD-like"/>
    <property type="match status" value="1"/>
</dbReference>
<dbReference type="PROSITE" id="PS00886">
    <property type="entry name" value="ILVD_EDD_1"/>
    <property type="match status" value="1"/>
</dbReference>
<dbReference type="PROSITE" id="PS00887">
    <property type="entry name" value="ILVD_EDD_2"/>
    <property type="match status" value="1"/>
</dbReference>
<sequence length="553" mass="58668">MRSAIIKEGPERAANRSLLKATGVTDSEMKKPFIAVVNSWNEIVPGHIHLDKLAEAVKAGIRNAGGVPFEFHTIGVCDGLAMGHEGMKYSLPSREVIEDTIELMVRAHQFDGMVLIPTCDKIVPGHLMAAGRLDIPAIVVTGGPMLPGYVDDKYTDLISVFEGVGAYSAGKLSEAELKRLENLSCAGAGSCAGMFTANTMACMTEALGLSLPGCATAHAVDAKKVRIAKESGERIVALVKENLTPRKIVTQKSFENAIMVDMAVGGSTNTTLHLPALAHEFGLELPLKTFDELSRTTPHLISLRPGGPNFMLHFDRAGGVEAVVQRLASKLHLDQLTVNGKTIGENLDELEIVNPKLNAEIITTLENPIHAEGGIAVLKGSLAPDGSVVKQAAVDPKMRVHTGPAKVYDCEEDAMKSILAGDVKPGDIVVIRYEGPKGGPGMREMLAATAAIGGMGLLESVALITDGRFSGGTRGPCIGHVSPEASEGGPIGLVKDGDLIEINIPERILNLKVTEEELEKRKAAFVPPKKEVTGYLARYQRSVHSANTGGIVD</sequence>
<comment type="function">
    <text evidence="1">Functions in the biosynthesis of branched-chain amino acids. Catalyzes the dehydration of (2R,3R)-2,3-dihydroxy-3-methylpentanoate (2,3-dihydroxy-3-methylvalerate) into 2-oxo-3-methylpentanoate (2-oxo-3-methylvalerate) and of (2R)-2,3-dihydroxy-3-methylbutanoate (2,3-dihydroxyisovalerate) into 2-oxo-3-methylbutanoate (2-oxoisovalerate), the penultimate precursor to L-isoleucine and L-valine, respectively.</text>
</comment>
<comment type="catalytic activity">
    <reaction evidence="1">
        <text>(2R)-2,3-dihydroxy-3-methylbutanoate = 3-methyl-2-oxobutanoate + H2O</text>
        <dbReference type="Rhea" id="RHEA:24809"/>
        <dbReference type="ChEBI" id="CHEBI:11851"/>
        <dbReference type="ChEBI" id="CHEBI:15377"/>
        <dbReference type="ChEBI" id="CHEBI:49072"/>
        <dbReference type="EC" id="4.2.1.9"/>
    </reaction>
    <physiologicalReaction direction="left-to-right" evidence="1">
        <dbReference type="Rhea" id="RHEA:24810"/>
    </physiologicalReaction>
</comment>
<comment type="catalytic activity">
    <reaction evidence="1">
        <text>(2R,3R)-2,3-dihydroxy-3-methylpentanoate = (S)-3-methyl-2-oxopentanoate + H2O</text>
        <dbReference type="Rhea" id="RHEA:27694"/>
        <dbReference type="ChEBI" id="CHEBI:15377"/>
        <dbReference type="ChEBI" id="CHEBI:35146"/>
        <dbReference type="ChEBI" id="CHEBI:49258"/>
        <dbReference type="EC" id="4.2.1.9"/>
    </reaction>
    <physiologicalReaction direction="left-to-right" evidence="1">
        <dbReference type="Rhea" id="RHEA:27695"/>
    </physiologicalReaction>
</comment>
<comment type="cofactor">
    <cofactor evidence="1">
        <name>[2Fe-2S] cluster</name>
        <dbReference type="ChEBI" id="CHEBI:190135"/>
    </cofactor>
    <text evidence="1">Binds 1 [2Fe-2S] cluster per subunit. This cluster acts as a Lewis acid cofactor.</text>
</comment>
<comment type="cofactor">
    <cofactor evidence="1">
        <name>Mg(2+)</name>
        <dbReference type="ChEBI" id="CHEBI:18420"/>
    </cofactor>
</comment>
<comment type="pathway">
    <text evidence="1">Amino-acid biosynthesis; L-isoleucine biosynthesis; L-isoleucine from 2-oxobutanoate: step 3/4.</text>
</comment>
<comment type="pathway">
    <text evidence="1">Amino-acid biosynthesis; L-valine biosynthesis; L-valine from pyruvate: step 3/4.</text>
</comment>
<comment type="subunit">
    <text evidence="1">Homodimer.</text>
</comment>
<comment type="similarity">
    <text evidence="1">Belongs to the IlvD/Edd family.</text>
</comment>
<organism>
    <name type="scientific">Methanosarcina acetivorans (strain ATCC 35395 / DSM 2834 / JCM 12185 / C2A)</name>
    <dbReference type="NCBI Taxonomy" id="188937"/>
    <lineage>
        <taxon>Archaea</taxon>
        <taxon>Methanobacteriati</taxon>
        <taxon>Methanobacteriota</taxon>
        <taxon>Stenosarchaea group</taxon>
        <taxon>Methanomicrobia</taxon>
        <taxon>Methanosarcinales</taxon>
        <taxon>Methanosarcinaceae</taxon>
        <taxon>Methanosarcina</taxon>
    </lineage>
</organism>
<name>ILVD1_METAC</name>
<accession>Q8TPV2</accession>
<reference key="1">
    <citation type="journal article" date="2002" name="Genome Res.">
        <title>The genome of Methanosarcina acetivorans reveals extensive metabolic and physiological diversity.</title>
        <authorList>
            <person name="Galagan J.E."/>
            <person name="Nusbaum C."/>
            <person name="Roy A."/>
            <person name="Endrizzi M.G."/>
            <person name="Macdonald P."/>
            <person name="FitzHugh W."/>
            <person name="Calvo S."/>
            <person name="Engels R."/>
            <person name="Smirnov S."/>
            <person name="Atnoor D."/>
            <person name="Brown A."/>
            <person name="Allen N."/>
            <person name="Naylor J."/>
            <person name="Stange-Thomann N."/>
            <person name="DeArellano K."/>
            <person name="Johnson R."/>
            <person name="Linton L."/>
            <person name="McEwan P."/>
            <person name="McKernan K."/>
            <person name="Talamas J."/>
            <person name="Tirrell A."/>
            <person name="Ye W."/>
            <person name="Zimmer A."/>
            <person name="Barber R.D."/>
            <person name="Cann I."/>
            <person name="Graham D.E."/>
            <person name="Grahame D.A."/>
            <person name="Guss A.M."/>
            <person name="Hedderich R."/>
            <person name="Ingram-Smith C."/>
            <person name="Kuettner H.C."/>
            <person name="Krzycki J.A."/>
            <person name="Leigh J.A."/>
            <person name="Li W."/>
            <person name="Liu J."/>
            <person name="Mukhopadhyay B."/>
            <person name="Reeve J.N."/>
            <person name="Smith K."/>
            <person name="Springer T.A."/>
            <person name="Umayam L.A."/>
            <person name="White O."/>
            <person name="White R.H."/>
            <person name="de Macario E.C."/>
            <person name="Ferry J.G."/>
            <person name="Jarrell K.F."/>
            <person name="Jing H."/>
            <person name="Macario A.J.L."/>
            <person name="Paulsen I.T."/>
            <person name="Pritchett M."/>
            <person name="Sowers K.R."/>
            <person name="Swanson R.V."/>
            <person name="Zinder S.H."/>
            <person name="Lander E."/>
            <person name="Metcalf W.W."/>
            <person name="Birren B."/>
        </authorList>
    </citation>
    <scope>NUCLEOTIDE SEQUENCE [LARGE SCALE GENOMIC DNA]</scope>
    <source>
        <strain>ATCC 35395 / DSM 2834 / JCM 12185 / C2A</strain>
    </source>
</reference>
<gene>
    <name evidence="1" type="primary">ilvD1</name>
    <name type="ordered locus">MA_1802</name>
</gene>
<feature type="chain" id="PRO_0000103539" description="Dihydroxy-acid dehydratase 1">
    <location>
        <begin position="1"/>
        <end position="553"/>
    </location>
</feature>
<feature type="active site" description="Proton acceptor" evidence="1">
    <location>
        <position position="470"/>
    </location>
</feature>
<feature type="binding site" evidence="1">
    <location>
        <position position="78"/>
    </location>
    <ligand>
        <name>Mg(2+)</name>
        <dbReference type="ChEBI" id="CHEBI:18420"/>
    </ligand>
</feature>
<feature type="binding site" evidence="1">
    <location>
        <position position="119"/>
    </location>
    <ligand>
        <name>[2Fe-2S] cluster</name>
        <dbReference type="ChEBI" id="CHEBI:190135"/>
    </ligand>
</feature>
<feature type="binding site" evidence="1">
    <location>
        <position position="120"/>
    </location>
    <ligand>
        <name>Mg(2+)</name>
        <dbReference type="ChEBI" id="CHEBI:18420"/>
    </ligand>
</feature>
<feature type="binding site" description="via carbamate group" evidence="1">
    <location>
        <position position="121"/>
    </location>
    <ligand>
        <name>Mg(2+)</name>
        <dbReference type="ChEBI" id="CHEBI:18420"/>
    </ligand>
</feature>
<feature type="binding site" evidence="1">
    <location>
        <position position="191"/>
    </location>
    <ligand>
        <name>[2Fe-2S] cluster</name>
        <dbReference type="ChEBI" id="CHEBI:190135"/>
    </ligand>
</feature>
<feature type="binding site" evidence="1">
    <location>
        <position position="444"/>
    </location>
    <ligand>
        <name>Mg(2+)</name>
        <dbReference type="ChEBI" id="CHEBI:18420"/>
    </ligand>
</feature>
<feature type="modified residue" description="N6-carboxylysine" evidence="1">
    <location>
        <position position="121"/>
    </location>
</feature>
<keyword id="KW-0001">2Fe-2S</keyword>
<keyword id="KW-0028">Amino-acid biosynthesis</keyword>
<keyword id="KW-0100">Branched-chain amino acid biosynthesis</keyword>
<keyword id="KW-0408">Iron</keyword>
<keyword id="KW-0411">Iron-sulfur</keyword>
<keyword id="KW-0456">Lyase</keyword>
<keyword id="KW-0460">Magnesium</keyword>
<keyword id="KW-0479">Metal-binding</keyword>
<keyword id="KW-1185">Reference proteome</keyword>
<protein>
    <recommendedName>
        <fullName evidence="1">Dihydroxy-acid dehydratase 1</fullName>
        <shortName evidence="1">DAD 1</shortName>
        <ecNumber evidence="1">4.2.1.9</ecNumber>
    </recommendedName>
</protein>
<evidence type="ECO:0000255" key="1">
    <source>
        <dbReference type="HAMAP-Rule" id="MF_00012"/>
    </source>
</evidence>
<proteinExistence type="inferred from homology"/>